<sequence length="156" mass="17903">MSRKKSAKVREVLADPIFNSVVVTKLINTIMLDGKKSIAQDILYSAFDLVKEKTKKDPMQVFTQAVENITPQLEIRTRRIGGTNYQVPTEVSKRRKQALSLRWLVQYARLRNDKSMDLRLANEIIDAANKTGGAIKKREDTHKMAEANKAFAHFRW</sequence>
<organism>
    <name type="scientific">Mycoplasmopsis synoviae (strain 53)</name>
    <name type="common">Mycoplasma synoviae</name>
    <dbReference type="NCBI Taxonomy" id="262723"/>
    <lineage>
        <taxon>Bacteria</taxon>
        <taxon>Bacillati</taxon>
        <taxon>Mycoplasmatota</taxon>
        <taxon>Mycoplasmoidales</taxon>
        <taxon>Metamycoplasmataceae</taxon>
        <taxon>Mycoplasmopsis</taxon>
    </lineage>
</organism>
<feature type="chain" id="PRO_0000226509" description="Small ribosomal subunit protein uS7">
    <location>
        <begin position="1"/>
        <end position="156"/>
    </location>
</feature>
<proteinExistence type="inferred from homology"/>
<name>RS7_MYCS5</name>
<reference key="1">
    <citation type="journal article" date="2005" name="J. Bacteriol.">
        <title>Swine and poultry pathogens: the complete genome sequences of two strains of Mycoplasma hyopneumoniae and a strain of Mycoplasma synoviae.</title>
        <authorList>
            <person name="Vasconcelos A.T.R."/>
            <person name="Ferreira H.B."/>
            <person name="Bizarro C.V."/>
            <person name="Bonatto S.L."/>
            <person name="Carvalho M.O."/>
            <person name="Pinto P.M."/>
            <person name="Almeida D.F."/>
            <person name="Almeida L.G.P."/>
            <person name="Almeida R."/>
            <person name="Alves-Junior L."/>
            <person name="Assuncao E.N."/>
            <person name="Azevedo V.A.C."/>
            <person name="Bogo M.R."/>
            <person name="Brigido M.M."/>
            <person name="Brocchi M."/>
            <person name="Burity H.A."/>
            <person name="Camargo A.A."/>
            <person name="Camargo S.S."/>
            <person name="Carepo M.S."/>
            <person name="Carraro D.M."/>
            <person name="de Mattos Cascardo J.C."/>
            <person name="Castro L.A."/>
            <person name="Cavalcanti G."/>
            <person name="Chemale G."/>
            <person name="Collevatti R.G."/>
            <person name="Cunha C.W."/>
            <person name="Dallagiovanna B."/>
            <person name="Dambros B.P."/>
            <person name="Dellagostin O.A."/>
            <person name="Falcao C."/>
            <person name="Fantinatti-Garboggini F."/>
            <person name="Felipe M.S.S."/>
            <person name="Fiorentin L."/>
            <person name="Franco G.R."/>
            <person name="Freitas N.S.A."/>
            <person name="Frias D."/>
            <person name="Grangeiro T.B."/>
            <person name="Grisard E.C."/>
            <person name="Guimaraes C.T."/>
            <person name="Hungria M."/>
            <person name="Jardim S.N."/>
            <person name="Krieger M.A."/>
            <person name="Laurino J.P."/>
            <person name="Lima L.F.A."/>
            <person name="Lopes M.I."/>
            <person name="Loreto E.L.S."/>
            <person name="Madeira H.M.F."/>
            <person name="Manfio G.P."/>
            <person name="Maranhao A.Q."/>
            <person name="Martinkovics C.T."/>
            <person name="Medeiros S.R.B."/>
            <person name="Moreira M.A.M."/>
            <person name="Neiva M."/>
            <person name="Ramalho-Neto C.E."/>
            <person name="Nicolas M.F."/>
            <person name="Oliveira S.C."/>
            <person name="Paixao R.F.C."/>
            <person name="Pedrosa F.O."/>
            <person name="Pena S.D.J."/>
            <person name="Pereira M."/>
            <person name="Pereira-Ferrari L."/>
            <person name="Piffer I."/>
            <person name="Pinto L.S."/>
            <person name="Potrich D.P."/>
            <person name="Salim A.C.M."/>
            <person name="Santos F.R."/>
            <person name="Schmitt R."/>
            <person name="Schneider M.P.C."/>
            <person name="Schrank A."/>
            <person name="Schrank I.S."/>
            <person name="Schuck A.F."/>
            <person name="Seuanez H.N."/>
            <person name="Silva D.W."/>
            <person name="Silva R."/>
            <person name="Silva S.C."/>
            <person name="Soares C.M.A."/>
            <person name="Souza K.R.L."/>
            <person name="Souza R.C."/>
            <person name="Staats C.C."/>
            <person name="Steffens M.B.R."/>
            <person name="Teixeira S.M.R."/>
            <person name="Urmenyi T.P."/>
            <person name="Vainstein M.H."/>
            <person name="Zuccherato L.W."/>
            <person name="Simpson A.J.G."/>
            <person name="Zaha A."/>
        </authorList>
    </citation>
    <scope>NUCLEOTIDE SEQUENCE [LARGE SCALE GENOMIC DNA]</scope>
    <source>
        <strain>53</strain>
    </source>
</reference>
<dbReference type="EMBL" id="AE017245">
    <property type="protein sequence ID" value="AAZ43469.1"/>
    <property type="molecule type" value="Genomic_DNA"/>
</dbReference>
<dbReference type="RefSeq" id="WP_011283212.1">
    <property type="nucleotide sequence ID" value="NC_007294.1"/>
</dbReference>
<dbReference type="SMR" id="Q4A702"/>
<dbReference type="STRING" id="262723.MS53_0048"/>
<dbReference type="KEGG" id="msy:MS53_0048"/>
<dbReference type="eggNOG" id="COG0049">
    <property type="taxonomic scope" value="Bacteria"/>
</dbReference>
<dbReference type="HOGENOM" id="CLU_072226_1_1_14"/>
<dbReference type="OrthoDB" id="9807653at2"/>
<dbReference type="Proteomes" id="UP000000549">
    <property type="component" value="Chromosome"/>
</dbReference>
<dbReference type="GO" id="GO:0015935">
    <property type="term" value="C:small ribosomal subunit"/>
    <property type="evidence" value="ECO:0007669"/>
    <property type="project" value="InterPro"/>
</dbReference>
<dbReference type="GO" id="GO:0019843">
    <property type="term" value="F:rRNA binding"/>
    <property type="evidence" value="ECO:0007669"/>
    <property type="project" value="UniProtKB-UniRule"/>
</dbReference>
<dbReference type="GO" id="GO:0003735">
    <property type="term" value="F:structural constituent of ribosome"/>
    <property type="evidence" value="ECO:0007669"/>
    <property type="project" value="InterPro"/>
</dbReference>
<dbReference type="GO" id="GO:0000049">
    <property type="term" value="F:tRNA binding"/>
    <property type="evidence" value="ECO:0007669"/>
    <property type="project" value="UniProtKB-UniRule"/>
</dbReference>
<dbReference type="GO" id="GO:0006412">
    <property type="term" value="P:translation"/>
    <property type="evidence" value="ECO:0007669"/>
    <property type="project" value="UniProtKB-UniRule"/>
</dbReference>
<dbReference type="CDD" id="cd14869">
    <property type="entry name" value="uS7_Bacteria"/>
    <property type="match status" value="1"/>
</dbReference>
<dbReference type="FunFam" id="1.10.455.10:FF:000001">
    <property type="entry name" value="30S ribosomal protein S7"/>
    <property type="match status" value="1"/>
</dbReference>
<dbReference type="Gene3D" id="1.10.455.10">
    <property type="entry name" value="Ribosomal protein S7 domain"/>
    <property type="match status" value="1"/>
</dbReference>
<dbReference type="HAMAP" id="MF_00480_B">
    <property type="entry name" value="Ribosomal_uS7_B"/>
    <property type="match status" value="1"/>
</dbReference>
<dbReference type="InterPro" id="IPR000235">
    <property type="entry name" value="Ribosomal_uS7"/>
</dbReference>
<dbReference type="InterPro" id="IPR005717">
    <property type="entry name" value="Ribosomal_uS7_bac/org-type"/>
</dbReference>
<dbReference type="InterPro" id="IPR020606">
    <property type="entry name" value="Ribosomal_uS7_CS"/>
</dbReference>
<dbReference type="InterPro" id="IPR023798">
    <property type="entry name" value="Ribosomal_uS7_dom"/>
</dbReference>
<dbReference type="InterPro" id="IPR036823">
    <property type="entry name" value="Ribosomal_uS7_dom_sf"/>
</dbReference>
<dbReference type="NCBIfam" id="TIGR01029">
    <property type="entry name" value="rpsG_bact"/>
    <property type="match status" value="1"/>
</dbReference>
<dbReference type="PANTHER" id="PTHR11205">
    <property type="entry name" value="RIBOSOMAL PROTEIN S7"/>
    <property type="match status" value="1"/>
</dbReference>
<dbReference type="Pfam" id="PF00177">
    <property type="entry name" value="Ribosomal_S7"/>
    <property type="match status" value="1"/>
</dbReference>
<dbReference type="PIRSF" id="PIRSF002122">
    <property type="entry name" value="RPS7p_RPS7a_RPS5e_RPS7o"/>
    <property type="match status" value="1"/>
</dbReference>
<dbReference type="SUPFAM" id="SSF47973">
    <property type="entry name" value="Ribosomal protein S7"/>
    <property type="match status" value="1"/>
</dbReference>
<dbReference type="PROSITE" id="PS00052">
    <property type="entry name" value="RIBOSOMAL_S7"/>
    <property type="match status" value="1"/>
</dbReference>
<protein>
    <recommendedName>
        <fullName evidence="1">Small ribosomal subunit protein uS7</fullName>
    </recommendedName>
    <alternativeName>
        <fullName evidence="2">30S ribosomal protein S7</fullName>
    </alternativeName>
</protein>
<accession>Q4A702</accession>
<evidence type="ECO:0000255" key="1">
    <source>
        <dbReference type="HAMAP-Rule" id="MF_00480"/>
    </source>
</evidence>
<evidence type="ECO:0000305" key="2"/>
<keyword id="KW-1185">Reference proteome</keyword>
<keyword id="KW-0687">Ribonucleoprotein</keyword>
<keyword id="KW-0689">Ribosomal protein</keyword>
<keyword id="KW-0694">RNA-binding</keyword>
<keyword id="KW-0699">rRNA-binding</keyword>
<keyword id="KW-0820">tRNA-binding</keyword>
<gene>
    <name evidence="1" type="primary">rpsG</name>
    <name type="ordered locus">MS53_0048</name>
</gene>
<comment type="function">
    <text evidence="1">One of the primary rRNA binding proteins, it binds directly to 16S rRNA where it nucleates assembly of the head domain of the 30S subunit. Is located at the subunit interface close to the decoding center, probably blocks exit of the E-site tRNA.</text>
</comment>
<comment type="subunit">
    <text evidence="1">Part of the 30S ribosomal subunit. Contacts proteins S9 and S11.</text>
</comment>
<comment type="similarity">
    <text evidence="1">Belongs to the universal ribosomal protein uS7 family.</text>
</comment>